<reference key="1">
    <citation type="journal article" date="1984" name="EMBO J.">
        <title>Complete nucleotide sequence of the infectious cloned DNA components of tomato golden mosaic virus: potential coding regions and regulatory sequences.</title>
        <authorList>
            <person name="Hamilton W.D.O."/>
            <person name="Stein V.E."/>
            <person name="Coutts R.H.A."/>
            <person name="Buck K.W."/>
        </authorList>
    </citation>
    <scope>NUCLEOTIDE SEQUENCE [GENOMIC DNA]</scope>
</reference>
<dbReference type="EMBL" id="K02029">
    <property type="protein sequence ID" value="AAA46582.1"/>
    <property type="molecule type" value="Genomic_DNA"/>
</dbReference>
<dbReference type="PIR" id="A04163">
    <property type="entry name" value="QQCVR1"/>
</dbReference>
<dbReference type="SMR" id="P03560"/>
<dbReference type="KEGG" id="vg:956402"/>
<dbReference type="Proteomes" id="UP000007405">
    <property type="component" value="Genome"/>
</dbReference>
<dbReference type="GO" id="GO:0043657">
    <property type="term" value="C:host cell"/>
    <property type="evidence" value="ECO:0007669"/>
    <property type="project" value="GOC"/>
</dbReference>
<dbReference type="GO" id="GO:0042025">
    <property type="term" value="C:host cell nucleus"/>
    <property type="evidence" value="ECO:0007669"/>
    <property type="project" value="UniProtKB-SubCell"/>
</dbReference>
<dbReference type="GO" id="GO:0039615">
    <property type="term" value="C:T=1 icosahedral viral capsid"/>
    <property type="evidence" value="ECO:0007669"/>
    <property type="project" value="UniProtKB-KW"/>
</dbReference>
<dbReference type="GO" id="GO:0003677">
    <property type="term" value="F:DNA binding"/>
    <property type="evidence" value="ECO:0007669"/>
    <property type="project" value="UniProtKB-KW"/>
</dbReference>
<dbReference type="GO" id="GO:0005198">
    <property type="term" value="F:structural molecule activity"/>
    <property type="evidence" value="ECO:0007669"/>
    <property type="project" value="InterPro"/>
</dbReference>
<dbReference type="GO" id="GO:0008270">
    <property type="term" value="F:zinc ion binding"/>
    <property type="evidence" value="ECO:0007669"/>
    <property type="project" value="UniProtKB-KW"/>
</dbReference>
<dbReference type="GO" id="GO:0046718">
    <property type="term" value="P:symbiont entry into host cell"/>
    <property type="evidence" value="ECO:0007669"/>
    <property type="project" value="UniProtKB-KW"/>
</dbReference>
<dbReference type="GO" id="GO:0075732">
    <property type="term" value="P:viral penetration into host nucleus"/>
    <property type="evidence" value="ECO:0007669"/>
    <property type="project" value="UniProtKB-KW"/>
</dbReference>
<dbReference type="Gene3D" id="2.60.120.20">
    <property type="match status" value="1"/>
</dbReference>
<dbReference type="InterPro" id="IPR000650">
    <property type="entry name" value="Gem_coat_AR1"/>
</dbReference>
<dbReference type="InterPro" id="IPR000263">
    <property type="entry name" value="GV_A/BR1_coat"/>
</dbReference>
<dbReference type="InterPro" id="IPR029053">
    <property type="entry name" value="Viral_coat"/>
</dbReference>
<dbReference type="Pfam" id="PF00844">
    <property type="entry name" value="Gemini_coat"/>
    <property type="match status" value="1"/>
</dbReference>
<dbReference type="PRINTS" id="PR00224">
    <property type="entry name" value="GEMCOATAR1"/>
</dbReference>
<dbReference type="PRINTS" id="PR00223">
    <property type="entry name" value="GEMCOATARBR1"/>
</dbReference>
<feature type="chain" id="PRO_0000222192" description="Capsid protein">
    <location>
        <begin position="1"/>
        <end position="247"/>
    </location>
</feature>
<feature type="short sequence motif" description="Bipartite nuclear localization signal" evidence="2">
    <location>
        <begin position="3"/>
        <end position="20"/>
    </location>
</feature>
<feature type="short sequence motif" description="Nuclear localization signal" evidence="2">
    <location>
        <begin position="31"/>
        <end position="45"/>
    </location>
</feature>
<feature type="short sequence motif" description="Nuclear export signal" evidence="2">
    <location>
        <begin position="92"/>
        <end position="113"/>
    </location>
</feature>
<feature type="short sequence motif" description="Bipartite nuclear localization signal" evidence="2">
    <location>
        <begin position="191"/>
        <end position="238"/>
    </location>
</feature>
<organismHost>
    <name type="scientific">Solanum lycopersicum</name>
    <name type="common">Tomato</name>
    <name type="synonym">Lycopersicon esculentum</name>
    <dbReference type="NCBI Taxonomy" id="4081"/>
</organismHost>
<name>CAPSD_TGMVY</name>
<keyword id="KW-0167">Capsid protein</keyword>
<keyword id="KW-0238">DNA-binding</keyword>
<keyword id="KW-1048">Host nucleus</keyword>
<keyword id="KW-0945">Host-virus interaction</keyword>
<keyword id="KW-0479">Metal-binding</keyword>
<keyword id="KW-1185">Reference proteome</keyword>
<keyword id="KW-1140">T=1 icosahedral capsid protein</keyword>
<keyword id="KW-1163">Viral penetration into host nucleus</keyword>
<keyword id="KW-0946">Virion</keyword>
<keyword id="KW-1160">Virus entry into host cell</keyword>
<keyword id="KW-0862">Zinc</keyword>
<keyword id="KW-0863">Zinc-finger</keyword>
<sequence length="247" mass="28684">MPKRDAPWRLMAGTSKVSRSANYSPRGSLPKRDAWVNRPMYRKPRIYRSLRGPDVPKGCEGPCKVQSYEQRHDISLVGKVMCISDVTRGNGITHRVGKRFCVKSVYILGKIWMDENIKLKNHTNSVMFWLVRDRRPYGTPMDFGQVFNMFDNEPSTATVKNDLRDRFQVIHRFHAKVTGGQYASNEQALVRRFWKVNNNVVYNHQEAGKYENHTENALLLYMACTHASNPVYATLKIRIYFYDSITN</sequence>
<organism>
    <name type="scientific">Tomato golden mosaic virus (strain Yellow vein)</name>
    <name type="common">TGMV</name>
    <dbReference type="NCBI Taxonomy" id="223341"/>
    <lineage>
        <taxon>Viruses</taxon>
        <taxon>Monodnaviria</taxon>
        <taxon>Shotokuvirae</taxon>
        <taxon>Cressdnaviricota</taxon>
        <taxon>Repensiviricetes</taxon>
        <taxon>Geplafuvirales</taxon>
        <taxon>Geminiviridae</taxon>
        <taxon>Begomovirus</taxon>
        <taxon>Tomato golden mosaic virus</taxon>
    </lineage>
</organism>
<proteinExistence type="inferred from homology"/>
<gene>
    <name type="ORF">AR1</name>
    <name type="ORF">AV1</name>
</gene>
<protein>
    <recommendedName>
        <fullName>Capsid protein</fullName>
    </recommendedName>
    <alternativeName>
        <fullName>Coat protein</fullName>
        <shortName>CP</shortName>
    </alternativeName>
</protein>
<accession>P03560</accession>
<evidence type="ECO:0000250" key="1"/>
<evidence type="ECO:0000255" key="2"/>
<evidence type="ECO:0000305" key="3"/>
<comment type="function">
    <text>Encapsidates the viral DNA into characteristic twinned ('geminate') particles. Binds the genomic viral ssDNA and shuttles it into and out of the cell nucleus. The CP of bipartite geminiviruses is not required for cell-to-cell or systemic movement.</text>
</comment>
<comment type="subunit">
    <text evidence="1">Homomultimer. Binds to single-stranded and double-stranded viral DNA. Interacts (via nuclear localization signals) with host importin alpha-1a (By similarity).</text>
</comment>
<comment type="subcellular location">
    <subcellularLocation>
        <location evidence="3">Virion</location>
    </subcellularLocation>
    <subcellularLocation>
        <location evidence="1">Host nucleus</location>
    </subcellularLocation>
    <text evidence="1">It is actively transported into the host cell nucleus. It may be exported out of the nucleus through a nuclear export signal for cell-to-cell movement and spread (By similarity).</text>
</comment>
<comment type="similarity">
    <text evidence="3">Belongs to the geminiviridae capsid protein family.</text>
</comment>